<organism>
    <name type="scientific">Baumannia cicadellinicola subsp. Homalodisca coagulata</name>
    <dbReference type="NCBI Taxonomy" id="374463"/>
    <lineage>
        <taxon>Bacteria</taxon>
        <taxon>Pseudomonadati</taxon>
        <taxon>Pseudomonadota</taxon>
        <taxon>Gammaproteobacteria</taxon>
        <taxon>Candidatus Palibaumannia</taxon>
    </lineage>
</organism>
<feature type="chain" id="PRO_0000302481" description="ATP-dependent dethiobiotin synthetase BioD">
    <location>
        <begin position="1"/>
        <end position="225"/>
    </location>
</feature>
<feature type="active site" evidence="1">
    <location>
        <position position="38"/>
    </location>
</feature>
<feature type="binding site" evidence="1">
    <location>
        <begin position="13"/>
        <end position="18"/>
    </location>
    <ligand>
        <name>ATP</name>
        <dbReference type="ChEBI" id="CHEBI:30616"/>
    </ligand>
</feature>
<feature type="binding site" evidence="1">
    <location>
        <position position="17"/>
    </location>
    <ligand>
        <name>Mg(2+)</name>
        <dbReference type="ChEBI" id="CHEBI:18420"/>
    </ligand>
</feature>
<feature type="binding site" evidence="1">
    <location>
        <position position="42"/>
    </location>
    <ligand>
        <name>substrate</name>
    </ligand>
</feature>
<feature type="binding site" evidence="1">
    <location>
        <position position="55"/>
    </location>
    <ligand>
        <name>ATP</name>
        <dbReference type="ChEBI" id="CHEBI:30616"/>
    </ligand>
</feature>
<feature type="binding site" evidence="1">
    <location>
        <position position="55"/>
    </location>
    <ligand>
        <name>Mg(2+)</name>
        <dbReference type="ChEBI" id="CHEBI:18420"/>
    </ligand>
</feature>
<feature type="binding site" evidence="1">
    <location>
        <begin position="116"/>
        <end position="119"/>
    </location>
    <ligand>
        <name>ATP</name>
        <dbReference type="ChEBI" id="CHEBI:30616"/>
    </ligand>
</feature>
<feature type="binding site" evidence="1">
    <location>
        <position position="116"/>
    </location>
    <ligand>
        <name>Mg(2+)</name>
        <dbReference type="ChEBI" id="CHEBI:18420"/>
    </ligand>
</feature>
<feature type="binding site" evidence="1">
    <location>
        <begin position="176"/>
        <end position="177"/>
    </location>
    <ligand>
        <name>ATP</name>
        <dbReference type="ChEBI" id="CHEBI:30616"/>
    </ligand>
</feature>
<feature type="binding site" evidence="1">
    <location>
        <begin position="205"/>
        <end position="207"/>
    </location>
    <ligand>
        <name>ATP</name>
        <dbReference type="ChEBI" id="CHEBI:30616"/>
    </ligand>
</feature>
<comment type="function">
    <text evidence="1">Catalyzes a mechanistically unusual reaction, the ATP-dependent insertion of CO2 between the N7 and N8 nitrogen atoms of 7,8-diaminopelargonic acid (DAPA, also called 7,8-diammoniononanoate) to form a ureido ring.</text>
</comment>
<comment type="catalytic activity">
    <reaction evidence="1">
        <text>(7R,8S)-7,8-diammoniononanoate + CO2 + ATP = (4R,5S)-dethiobiotin + ADP + phosphate + 3 H(+)</text>
        <dbReference type="Rhea" id="RHEA:15805"/>
        <dbReference type="ChEBI" id="CHEBI:15378"/>
        <dbReference type="ChEBI" id="CHEBI:16526"/>
        <dbReference type="ChEBI" id="CHEBI:30616"/>
        <dbReference type="ChEBI" id="CHEBI:43474"/>
        <dbReference type="ChEBI" id="CHEBI:149469"/>
        <dbReference type="ChEBI" id="CHEBI:149473"/>
        <dbReference type="ChEBI" id="CHEBI:456216"/>
        <dbReference type="EC" id="6.3.3.3"/>
    </reaction>
</comment>
<comment type="cofactor">
    <cofactor evidence="1">
        <name>Mg(2+)</name>
        <dbReference type="ChEBI" id="CHEBI:18420"/>
    </cofactor>
</comment>
<comment type="pathway">
    <text evidence="1">Cofactor biosynthesis; biotin biosynthesis; biotin from 7,8-diaminononanoate: step 1/2.</text>
</comment>
<comment type="subunit">
    <text evidence="1">Homodimer.</text>
</comment>
<comment type="subcellular location">
    <subcellularLocation>
        <location evidence="1">Cytoplasm</location>
    </subcellularLocation>
</comment>
<comment type="similarity">
    <text evidence="1">Belongs to the dethiobiotin synthetase family.</text>
</comment>
<proteinExistence type="inferred from homology"/>
<accession>Q1LTL5</accession>
<dbReference type="EC" id="6.3.3.3" evidence="1"/>
<dbReference type="EMBL" id="CP000238">
    <property type="protein sequence ID" value="ABF13909.1"/>
    <property type="molecule type" value="Genomic_DNA"/>
</dbReference>
<dbReference type="RefSeq" id="WP_011520432.1">
    <property type="nucleotide sequence ID" value="NC_007984.1"/>
</dbReference>
<dbReference type="SMR" id="Q1LTL5"/>
<dbReference type="STRING" id="374463.BCI_0249"/>
<dbReference type="KEGG" id="bci:BCI_0249"/>
<dbReference type="HOGENOM" id="CLU_072551_0_0_6"/>
<dbReference type="OrthoDB" id="9802097at2"/>
<dbReference type="UniPathway" id="UPA00078">
    <property type="reaction ID" value="UER00161"/>
</dbReference>
<dbReference type="Proteomes" id="UP000002427">
    <property type="component" value="Chromosome"/>
</dbReference>
<dbReference type="GO" id="GO:0005829">
    <property type="term" value="C:cytosol"/>
    <property type="evidence" value="ECO:0007669"/>
    <property type="project" value="TreeGrafter"/>
</dbReference>
<dbReference type="GO" id="GO:0005524">
    <property type="term" value="F:ATP binding"/>
    <property type="evidence" value="ECO:0007669"/>
    <property type="project" value="UniProtKB-UniRule"/>
</dbReference>
<dbReference type="GO" id="GO:0004141">
    <property type="term" value="F:dethiobiotin synthase activity"/>
    <property type="evidence" value="ECO:0007669"/>
    <property type="project" value="UniProtKB-UniRule"/>
</dbReference>
<dbReference type="GO" id="GO:0000287">
    <property type="term" value="F:magnesium ion binding"/>
    <property type="evidence" value="ECO:0007669"/>
    <property type="project" value="UniProtKB-UniRule"/>
</dbReference>
<dbReference type="GO" id="GO:0009102">
    <property type="term" value="P:biotin biosynthetic process"/>
    <property type="evidence" value="ECO:0007669"/>
    <property type="project" value="UniProtKB-UniRule"/>
</dbReference>
<dbReference type="CDD" id="cd03109">
    <property type="entry name" value="DTBS"/>
    <property type="match status" value="1"/>
</dbReference>
<dbReference type="FunFam" id="3.40.50.300:FF:000292">
    <property type="entry name" value="ATP-dependent dethiobiotin synthetase BioD"/>
    <property type="match status" value="1"/>
</dbReference>
<dbReference type="Gene3D" id="3.40.50.300">
    <property type="entry name" value="P-loop containing nucleotide triphosphate hydrolases"/>
    <property type="match status" value="1"/>
</dbReference>
<dbReference type="HAMAP" id="MF_00336">
    <property type="entry name" value="BioD"/>
    <property type="match status" value="1"/>
</dbReference>
<dbReference type="InterPro" id="IPR004472">
    <property type="entry name" value="DTB_synth_BioD"/>
</dbReference>
<dbReference type="InterPro" id="IPR027417">
    <property type="entry name" value="P-loop_NTPase"/>
</dbReference>
<dbReference type="NCBIfam" id="TIGR00347">
    <property type="entry name" value="bioD"/>
    <property type="match status" value="1"/>
</dbReference>
<dbReference type="PANTHER" id="PTHR43210">
    <property type="entry name" value="DETHIOBIOTIN SYNTHETASE"/>
    <property type="match status" value="1"/>
</dbReference>
<dbReference type="PANTHER" id="PTHR43210:SF5">
    <property type="entry name" value="DETHIOBIOTIN SYNTHETASE"/>
    <property type="match status" value="1"/>
</dbReference>
<dbReference type="Pfam" id="PF13500">
    <property type="entry name" value="AAA_26"/>
    <property type="match status" value="1"/>
</dbReference>
<dbReference type="PIRSF" id="PIRSF006755">
    <property type="entry name" value="DTB_synth"/>
    <property type="match status" value="1"/>
</dbReference>
<dbReference type="SUPFAM" id="SSF52540">
    <property type="entry name" value="P-loop containing nucleoside triphosphate hydrolases"/>
    <property type="match status" value="1"/>
</dbReference>
<gene>
    <name evidence="1" type="primary">bioD</name>
    <name type="ordered locus">BCI_0249</name>
</gene>
<name>BIOD_BAUCH</name>
<reference key="1">
    <citation type="journal article" date="2006" name="PLoS Biol.">
        <title>Metabolic complementarity and genomics of the dual bacterial symbiosis of sharpshooters.</title>
        <authorList>
            <person name="Wu D."/>
            <person name="Daugherty S.C."/>
            <person name="Van Aken S.E."/>
            <person name="Pai G.H."/>
            <person name="Watkins K.L."/>
            <person name="Khouri H."/>
            <person name="Tallon L.J."/>
            <person name="Zaborsky J.M."/>
            <person name="Dunbar H.E."/>
            <person name="Tran P.L."/>
            <person name="Moran N.A."/>
            <person name="Eisen J.A."/>
        </authorList>
    </citation>
    <scope>NUCLEOTIDE SEQUENCE [LARGE SCALE GENOMIC DNA]</scope>
</reference>
<evidence type="ECO:0000255" key="1">
    <source>
        <dbReference type="HAMAP-Rule" id="MF_00336"/>
    </source>
</evidence>
<keyword id="KW-0067">ATP-binding</keyword>
<keyword id="KW-0093">Biotin biosynthesis</keyword>
<keyword id="KW-0963">Cytoplasm</keyword>
<keyword id="KW-0436">Ligase</keyword>
<keyword id="KW-0460">Magnesium</keyword>
<keyword id="KW-0479">Metal-binding</keyword>
<keyword id="KW-0547">Nucleotide-binding</keyword>
<keyword id="KW-1185">Reference proteome</keyword>
<protein>
    <recommendedName>
        <fullName evidence="1">ATP-dependent dethiobiotin synthetase BioD</fullName>
        <ecNumber evidence="1">6.3.3.3</ecNumber>
    </recommendedName>
    <alternativeName>
        <fullName evidence="1">DTB synthetase</fullName>
        <shortName evidence="1">DTBS</shortName>
    </alternativeName>
    <alternativeName>
        <fullName evidence="1">Dethiobiotin synthase</fullName>
    </alternativeName>
</protein>
<sequence length="225" mass="24497">MTKRYFITGTDTNVGKTLAACALLQAAISIGYHAAGYKPVATGYQLTLDGPRNNDALALLSNSNVILSYSQVNPLVFSEPTSPHIACRAEGRNIELSELSAGLKVIEQKSDWIVVEGAGGWFTPLGEGILYSDWVNYEKLPVILVIGMKLGCINHALLTALAIRQFGLQLVGWIANHIQPTTTWSQHYLAELRNRLDAPLIGDIPWLSNIPVALLAKYINLAELS</sequence>